<comment type="function">
    <text evidence="1">F(1)F(0) ATP synthase produces ATP from ADP in the presence of a proton or sodium gradient. F-type ATPases consist of two structural domains, F(1) containing the extramembraneous catalytic core and F(0) containing the membrane proton channel, linked together by a central stalk and a peripheral stalk. During catalysis, ATP synthesis in the catalytic domain of F(1) is coupled via a rotary mechanism of the central stalk subunits to proton translocation.</text>
</comment>
<comment type="function">
    <text evidence="1">This protein is part of the stalk that links CF(0) to CF(1). It either transmits conformational changes from CF(0) to CF(1) or is implicated in proton conduction.</text>
</comment>
<comment type="subunit">
    <text evidence="1">F-type ATPases have 2 components, F(1) - the catalytic core - and F(0) - the membrane proton channel. F(1) has five subunits: alpha(3), beta(3), gamma(1), delta(1), epsilon(1). F(0) has three main subunits: a(1), b(2) and c(10-14). The alpha and beta chains form an alternating ring which encloses part of the gamma chain. F(1) is attached to F(0) by a central stalk formed by the gamma and epsilon chains, while a peripheral stalk is formed by the delta and b chains.</text>
</comment>
<comment type="subcellular location">
    <subcellularLocation>
        <location evidence="1">Cell inner membrane</location>
        <topology evidence="1">Peripheral membrane protein</topology>
    </subcellularLocation>
</comment>
<comment type="similarity">
    <text evidence="1">Belongs to the ATPase delta chain family.</text>
</comment>
<feature type="chain" id="PRO_0000382066" description="ATP synthase subunit delta 2">
    <location>
        <begin position="1"/>
        <end position="213"/>
    </location>
</feature>
<gene>
    <name evidence="1" type="primary">atpH2</name>
    <name type="ordered locus">BHWA1_02192</name>
</gene>
<evidence type="ECO:0000255" key="1">
    <source>
        <dbReference type="HAMAP-Rule" id="MF_01416"/>
    </source>
</evidence>
<proteinExistence type="inferred from homology"/>
<keyword id="KW-0066">ATP synthesis</keyword>
<keyword id="KW-0997">Cell inner membrane</keyword>
<keyword id="KW-1003">Cell membrane</keyword>
<keyword id="KW-0139">CF(1)</keyword>
<keyword id="KW-0375">Hydrogen ion transport</keyword>
<keyword id="KW-0406">Ion transport</keyword>
<keyword id="KW-0472">Membrane</keyword>
<keyword id="KW-0813">Transport</keyword>
<name>ATPD2_BRAHW</name>
<accession>C0QW64</accession>
<protein>
    <recommendedName>
        <fullName evidence="1">ATP synthase subunit delta 2</fullName>
    </recommendedName>
    <alternativeName>
        <fullName evidence="1">ATP synthase F(1) sector subunit delta 2</fullName>
    </alternativeName>
    <alternativeName>
        <fullName evidence="1">F-type ATPase subunit delta 2</fullName>
        <shortName evidence="1">F-ATPase subunit delta 2</shortName>
    </alternativeName>
</protein>
<sequence length="213" mass="24579">MDPIAENILSDLKKEVLREVTREKASRFSRIVKNESSAKNYAKAMFDIASDIGKIEVIKSDLNVVYSSLLVDNDIFNFFKSSFIDGHLRMRILKKIYADKILEETFNLIAILVERDMINILFAIIVEYENLCNEYYNIIVVKITTASNMTDTEDMNKLKDHITNMISDKDIHFTFNIDENIIGGVVIEVEDVVYDYSVRRLLTELKSSISENN</sequence>
<dbReference type="EMBL" id="CP001357">
    <property type="protein sequence ID" value="ACN84650.1"/>
    <property type="molecule type" value="Genomic_DNA"/>
</dbReference>
<dbReference type="RefSeq" id="WP_012671682.1">
    <property type="nucleotide sequence ID" value="NC_012225.1"/>
</dbReference>
<dbReference type="SMR" id="C0QW64"/>
<dbReference type="STRING" id="565034.BHWA1_02192"/>
<dbReference type="GeneID" id="63963347"/>
<dbReference type="KEGG" id="bhy:BHWA1_02192"/>
<dbReference type="eggNOG" id="COG0712">
    <property type="taxonomic scope" value="Bacteria"/>
</dbReference>
<dbReference type="HOGENOM" id="CLU_085114_4_1_12"/>
<dbReference type="Proteomes" id="UP000001803">
    <property type="component" value="Chromosome"/>
</dbReference>
<dbReference type="GO" id="GO:0005886">
    <property type="term" value="C:plasma membrane"/>
    <property type="evidence" value="ECO:0007669"/>
    <property type="project" value="UniProtKB-SubCell"/>
</dbReference>
<dbReference type="GO" id="GO:0045259">
    <property type="term" value="C:proton-transporting ATP synthase complex"/>
    <property type="evidence" value="ECO:0007669"/>
    <property type="project" value="UniProtKB-KW"/>
</dbReference>
<dbReference type="GO" id="GO:0046933">
    <property type="term" value="F:proton-transporting ATP synthase activity, rotational mechanism"/>
    <property type="evidence" value="ECO:0007669"/>
    <property type="project" value="UniProtKB-UniRule"/>
</dbReference>
<dbReference type="Gene3D" id="1.10.520.20">
    <property type="entry name" value="N-terminal domain of the delta subunit of the F1F0-ATP synthase"/>
    <property type="match status" value="1"/>
</dbReference>
<dbReference type="HAMAP" id="MF_01416">
    <property type="entry name" value="ATP_synth_delta_bact"/>
    <property type="match status" value="1"/>
</dbReference>
<dbReference type="InterPro" id="IPR026015">
    <property type="entry name" value="ATP_synth_OSCP/delta_N_sf"/>
</dbReference>
<dbReference type="InterPro" id="IPR020781">
    <property type="entry name" value="ATPase_OSCP/d_CS"/>
</dbReference>
<dbReference type="InterPro" id="IPR000711">
    <property type="entry name" value="ATPase_OSCP/dsu"/>
</dbReference>
<dbReference type="NCBIfam" id="TIGR01145">
    <property type="entry name" value="ATP_synt_delta"/>
    <property type="match status" value="1"/>
</dbReference>
<dbReference type="PANTHER" id="PTHR11910">
    <property type="entry name" value="ATP SYNTHASE DELTA CHAIN"/>
    <property type="match status" value="1"/>
</dbReference>
<dbReference type="Pfam" id="PF00213">
    <property type="entry name" value="OSCP"/>
    <property type="match status" value="1"/>
</dbReference>
<dbReference type="PRINTS" id="PR00125">
    <property type="entry name" value="ATPASEDELTA"/>
</dbReference>
<dbReference type="SUPFAM" id="SSF47928">
    <property type="entry name" value="N-terminal domain of the delta subunit of the F1F0-ATP synthase"/>
    <property type="match status" value="1"/>
</dbReference>
<dbReference type="PROSITE" id="PS00389">
    <property type="entry name" value="ATPASE_DELTA"/>
    <property type="match status" value="1"/>
</dbReference>
<reference key="1">
    <citation type="journal article" date="2009" name="PLoS ONE">
        <title>Genome sequence of the pathogenic intestinal spirochete Brachyspira hyodysenteriae reveals adaptations to its lifestyle in the porcine large intestine.</title>
        <authorList>
            <person name="Bellgard M.I."/>
            <person name="Wanchanthuek P."/>
            <person name="La T."/>
            <person name="Ryan K."/>
            <person name="Moolhuijzen P."/>
            <person name="Albertyn Z."/>
            <person name="Shaban B."/>
            <person name="Motro Y."/>
            <person name="Dunn D.S."/>
            <person name="Schibeci D."/>
            <person name="Hunter A."/>
            <person name="Barrero R."/>
            <person name="Phillips N.D."/>
            <person name="Hampson D.J."/>
        </authorList>
    </citation>
    <scope>NUCLEOTIDE SEQUENCE [LARGE SCALE GENOMIC DNA]</scope>
    <source>
        <strain>ATCC 49526 / WA1</strain>
    </source>
</reference>
<organism>
    <name type="scientific">Brachyspira hyodysenteriae (strain ATCC 49526 / WA1)</name>
    <dbReference type="NCBI Taxonomy" id="565034"/>
    <lineage>
        <taxon>Bacteria</taxon>
        <taxon>Pseudomonadati</taxon>
        <taxon>Spirochaetota</taxon>
        <taxon>Spirochaetia</taxon>
        <taxon>Brachyspirales</taxon>
        <taxon>Brachyspiraceae</taxon>
        <taxon>Brachyspira</taxon>
    </lineage>
</organism>